<keyword id="KW-0963">Cytoplasm</keyword>
<keyword id="KW-0328">Glycosyltransferase</keyword>
<keyword id="KW-0660">Purine salvage</keyword>
<keyword id="KW-0808">Transferase</keyword>
<proteinExistence type="inferred from homology"/>
<name>APT_THEP1</name>
<reference key="1">
    <citation type="submission" date="2007-05" db="EMBL/GenBank/DDBJ databases">
        <title>Complete sequence of Thermotoga petrophila RKU-1.</title>
        <authorList>
            <consortium name="US DOE Joint Genome Institute"/>
            <person name="Copeland A."/>
            <person name="Lucas S."/>
            <person name="Lapidus A."/>
            <person name="Barry K."/>
            <person name="Glavina del Rio T."/>
            <person name="Dalin E."/>
            <person name="Tice H."/>
            <person name="Pitluck S."/>
            <person name="Sims D."/>
            <person name="Brettin T."/>
            <person name="Bruce D."/>
            <person name="Detter J.C."/>
            <person name="Han C."/>
            <person name="Tapia R."/>
            <person name="Schmutz J."/>
            <person name="Larimer F."/>
            <person name="Land M."/>
            <person name="Hauser L."/>
            <person name="Kyrpides N."/>
            <person name="Mikhailova N."/>
            <person name="Nelson K."/>
            <person name="Gogarten J.P."/>
            <person name="Noll K."/>
            <person name="Richardson P."/>
        </authorList>
    </citation>
    <scope>NUCLEOTIDE SEQUENCE [LARGE SCALE GENOMIC DNA]</scope>
    <source>
        <strain>ATCC BAA-488 / DSM 13995 / JCM 10881 / RKU-1</strain>
    </source>
</reference>
<evidence type="ECO:0000255" key="1">
    <source>
        <dbReference type="HAMAP-Rule" id="MF_00004"/>
    </source>
</evidence>
<dbReference type="EC" id="2.4.2.7" evidence="1"/>
<dbReference type="EMBL" id="CP000702">
    <property type="protein sequence ID" value="ABQ47412.1"/>
    <property type="molecule type" value="Genomic_DNA"/>
</dbReference>
<dbReference type="RefSeq" id="WP_011943870.1">
    <property type="nucleotide sequence ID" value="NC_009486.1"/>
</dbReference>
<dbReference type="SMR" id="A5IMI9"/>
<dbReference type="STRING" id="390874.Tpet_1399"/>
<dbReference type="KEGG" id="tpt:Tpet_1399"/>
<dbReference type="eggNOG" id="COG0503">
    <property type="taxonomic scope" value="Bacteria"/>
</dbReference>
<dbReference type="HOGENOM" id="CLU_063339_3_0_0"/>
<dbReference type="UniPathway" id="UPA00588">
    <property type="reaction ID" value="UER00646"/>
</dbReference>
<dbReference type="Proteomes" id="UP000006558">
    <property type="component" value="Chromosome"/>
</dbReference>
<dbReference type="GO" id="GO:0005737">
    <property type="term" value="C:cytoplasm"/>
    <property type="evidence" value="ECO:0007669"/>
    <property type="project" value="UniProtKB-SubCell"/>
</dbReference>
<dbReference type="GO" id="GO:0002055">
    <property type="term" value="F:adenine binding"/>
    <property type="evidence" value="ECO:0007669"/>
    <property type="project" value="TreeGrafter"/>
</dbReference>
<dbReference type="GO" id="GO:0003999">
    <property type="term" value="F:adenine phosphoribosyltransferase activity"/>
    <property type="evidence" value="ECO:0007669"/>
    <property type="project" value="UniProtKB-UniRule"/>
</dbReference>
<dbReference type="GO" id="GO:0016208">
    <property type="term" value="F:AMP binding"/>
    <property type="evidence" value="ECO:0007669"/>
    <property type="project" value="TreeGrafter"/>
</dbReference>
<dbReference type="GO" id="GO:0006168">
    <property type="term" value="P:adenine salvage"/>
    <property type="evidence" value="ECO:0007669"/>
    <property type="project" value="InterPro"/>
</dbReference>
<dbReference type="GO" id="GO:0044209">
    <property type="term" value="P:AMP salvage"/>
    <property type="evidence" value="ECO:0007669"/>
    <property type="project" value="UniProtKB-UniRule"/>
</dbReference>
<dbReference type="GO" id="GO:0006166">
    <property type="term" value="P:purine ribonucleoside salvage"/>
    <property type="evidence" value="ECO:0007669"/>
    <property type="project" value="UniProtKB-KW"/>
</dbReference>
<dbReference type="CDD" id="cd06223">
    <property type="entry name" value="PRTases_typeI"/>
    <property type="match status" value="1"/>
</dbReference>
<dbReference type="FunFam" id="3.40.50.2020:FF:000021">
    <property type="entry name" value="Adenine phosphoribosyltransferase"/>
    <property type="match status" value="1"/>
</dbReference>
<dbReference type="Gene3D" id="3.40.50.2020">
    <property type="match status" value="1"/>
</dbReference>
<dbReference type="HAMAP" id="MF_00004">
    <property type="entry name" value="Aden_phosphoribosyltr"/>
    <property type="match status" value="1"/>
</dbReference>
<dbReference type="InterPro" id="IPR005764">
    <property type="entry name" value="Ade_phspho_trans"/>
</dbReference>
<dbReference type="InterPro" id="IPR000836">
    <property type="entry name" value="PRibTrfase_dom"/>
</dbReference>
<dbReference type="InterPro" id="IPR029057">
    <property type="entry name" value="PRTase-like"/>
</dbReference>
<dbReference type="InterPro" id="IPR050054">
    <property type="entry name" value="UPRTase/APRTase"/>
</dbReference>
<dbReference type="NCBIfam" id="TIGR01090">
    <property type="entry name" value="apt"/>
    <property type="match status" value="1"/>
</dbReference>
<dbReference type="NCBIfam" id="NF002633">
    <property type="entry name" value="PRK02304.1-2"/>
    <property type="match status" value="1"/>
</dbReference>
<dbReference type="NCBIfam" id="NF002634">
    <property type="entry name" value="PRK02304.1-3"/>
    <property type="match status" value="1"/>
</dbReference>
<dbReference type="NCBIfam" id="NF002636">
    <property type="entry name" value="PRK02304.1-5"/>
    <property type="match status" value="1"/>
</dbReference>
<dbReference type="PANTHER" id="PTHR32315">
    <property type="entry name" value="ADENINE PHOSPHORIBOSYLTRANSFERASE"/>
    <property type="match status" value="1"/>
</dbReference>
<dbReference type="PANTHER" id="PTHR32315:SF3">
    <property type="entry name" value="ADENINE PHOSPHORIBOSYLTRANSFERASE"/>
    <property type="match status" value="1"/>
</dbReference>
<dbReference type="Pfam" id="PF00156">
    <property type="entry name" value="Pribosyltran"/>
    <property type="match status" value="1"/>
</dbReference>
<dbReference type="SUPFAM" id="SSF53271">
    <property type="entry name" value="PRTase-like"/>
    <property type="match status" value="1"/>
</dbReference>
<dbReference type="PROSITE" id="PS00103">
    <property type="entry name" value="PUR_PYR_PR_TRANSFER"/>
    <property type="match status" value="1"/>
</dbReference>
<gene>
    <name evidence="1" type="primary">apt</name>
    <name type="ordered locus">Tpet_1399</name>
</gene>
<comment type="function">
    <text evidence="1">Catalyzes a salvage reaction resulting in the formation of AMP, that is energically less costly than de novo synthesis.</text>
</comment>
<comment type="catalytic activity">
    <reaction evidence="1">
        <text>AMP + diphosphate = 5-phospho-alpha-D-ribose 1-diphosphate + adenine</text>
        <dbReference type="Rhea" id="RHEA:16609"/>
        <dbReference type="ChEBI" id="CHEBI:16708"/>
        <dbReference type="ChEBI" id="CHEBI:33019"/>
        <dbReference type="ChEBI" id="CHEBI:58017"/>
        <dbReference type="ChEBI" id="CHEBI:456215"/>
        <dbReference type="EC" id="2.4.2.7"/>
    </reaction>
</comment>
<comment type="pathway">
    <text evidence="1">Purine metabolism; AMP biosynthesis via salvage pathway; AMP from adenine: step 1/1.</text>
</comment>
<comment type="subunit">
    <text evidence="1">Homodimer.</text>
</comment>
<comment type="subcellular location">
    <subcellularLocation>
        <location evidence="1">Cytoplasm</location>
    </subcellularLocation>
</comment>
<comment type="similarity">
    <text evidence="1">Belongs to the purine/pyrimidine phosphoribosyltransferase family.</text>
</comment>
<feature type="chain" id="PRO_1000000368" description="Adenine phosphoribosyltransferase">
    <location>
        <begin position="1"/>
        <end position="170"/>
    </location>
</feature>
<sequence length="170" mass="19419">MDLKRFIRDIPDFPQKGIVFRDITPLLRNQEAFKEAIDRMCELVSDRDFDLVVAPEARGFILGATMAYKLGKGFVPVRKPGKLPYKTVYEEYQLEYGTERLHIHEDAVEKGQRVLIVDDVLATGGTAEALIRLVKKLGGEVVSLAFLVELSYLEPRKRLKSYDIKTLIVY</sequence>
<organism>
    <name type="scientific">Thermotoga petrophila (strain ATCC BAA-488 / DSM 13995 / JCM 10881 / RKU-1)</name>
    <dbReference type="NCBI Taxonomy" id="390874"/>
    <lineage>
        <taxon>Bacteria</taxon>
        <taxon>Thermotogati</taxon>
        <taxon>Thermotogota</taxon>
        <taxon>Thermotogae</taxon>
        <taxon>Thermotogales</taxon>
        <taxon>Thermotogaceae</taxon>
        <taxon>Thermotoga</taxon>
    </lineage>
</organism>
<accession>A5IMI9</accession>
<protein>
    <recommendedName>
        <fullName evidence="1">Adenine phosphoribosyltransferase</fullName>
        <shortName evidence="1">APRT</shortName>
        <ecNumber evidence="1">2.4.2.7</ecNumber>
    </recommendedName>
</protein>